<sequence>MKTVSQLIDMKQKQTKISMVTAYDFPSAKQVEAAGIDMILVGDSLGMTVLGYESTVQVTLADMIHHGRAVRRGAPNTFVVVDMPIGAVGISMTQDLNHALKLYQETNANAIKAEGAHITPFIEKATAIGIPVVAHLGLTPQSVGVMGYKLQGATKEAAEQLILDAKNVEQAGAVALVLEAIPNDLAEEISKHLTIPVIGIGAGKGTDGQVLVYHDMLNYGVEHKAKFVKQFADFSVGVDGLKQYDQEVKSGAFPSEEYTYKKKIMNEVNNND</sequence>
<protein>
    <recommendedName>
        <fullName evidence="1">3-methyl-2-oxobutanoate hydroxymethyltransferase</fullName>
        <ecNumber evidence="1">2.1.2.11</ecNumber>
    </recommendedName>
    <alternativeName>
        <fullName evidence="1">Ketopantoate hydroxymethyltransferase</fullName>
        <shortName evidence="1">KPHMT</shortName>
    </alternativeName>
</protein>
<feature type="chain" id="PRO_1000076835" description="3-methyl-2-oxobutanoate hydroxymethyltransferase">
    <location>
        <begin position="1"/>
        <end position="272"/>
    </location>
</feature>
<feature type="active site" description="Proton acceptor" evidence="1">
    <location>
        <position position="179"/>
    </location>
</feature>
<feature type="binding site" evidence="1">
    <location>
        <begin position="43"/>
        <end position="44"/>
    </location>
    <ligand>
        <name>3-methyl-2-oxobutanoate</name>
        <dbReference type="ChEBI" id="CHEBI:11851"/>
    </ligand>
</feature>
<feature type="binding site" evidence="1">
    <location>
        <position position="43"/>
    </location>
    <ligand>
        <name>Mg(2+)</name>
        <dbReference type="ChEBI" id="CHEBI:18420"/>
    </ligand>
</feature>
<feature type="binding site" evidence="1">
    <location>
        <position position="82"/>
    </location>
    <ligand>
        <name>3-methyl-2-oxobutanoate</name>
        <dbReference type="ChEBI" id="CHEBI:11851"/>
    </ligand>
</feature>
<feature type="binding site" evidence="1">
    <location>
        <position position="82"/>
    </location>
    <ligand>
        <name>Mg(2+)</name>
        <dbReference type="ChEBI" id="CHEBI:18420"/>
    </ligand>
</feature>
<feature type="binding site" evidence="1">
    <location>
        <position position="112"/>
    </location>
    <ligand>
        <name>3-methyl-2-oxobutanoate</name>
        <dbReference type="ChEBI" id="CHEBI:11851"/>
    </ligand>
</feature>
<feature type="binding site" evidence="1">
    <location>
        <position position="114"/>
    </location>
    <ligand>
        <name>Mg(2+)</name>
        <dbReference type="ChEBI" id="CHEBI:18420"/>
    </ligand>
</feature>
<organism>
    <name type="scientific">Staphylococcus aureus (strain JH9)</name>
    <dbReference type="NCBI Taxonomy" id="359786"/>
    <lineage>
        <taxon>Bacteria</taxon>
        <taxon>Bacillati</taxon>
        <taxon>Bacillota</taxon>
        <taxon>Bacilli</taxon>
        <taxon>Bacillales</taxon>
        <taxon>Staphylococcaceae</taxon>
        <taxon>Staphylococcus</taxon>
    </lineage>
</organism>
<evidence type="ECO:0000255" key="1">
    <source>
        <dbReference type="HAMAP-Rule" id="MF_00156"/>
    </source>
</evidence>
<gene>
    <name evidence="1" type="primary">panB</name>
    <name type="ordered locus">SaurJH9_2621</name>
</gene>
<accession>A5IW24</accession>
<keyword id="KW-0963">Cytoplasm</keyword>
<keyword id="KW-0460">Magnesium</keyword>
<keyword id="KW-0479">Metal-binding</keyword>
<keyword id="KW-0566">Pantothenate biosynthesis</keyword>
<keyword id="KW-0808">Transferase</keyword>
<proteinExistence type="inferred from homology"/>
<dbReference type="EC" id="2.1.2.11" evidence="1"/>
<dbReference type="EMBL" id="CP000703">
    <property type="protein sequence ID" value="ABQ50397.1"/>
    <property type="molecule type" value="Genomic_DNA"/>
</dbReference>
<dbReference type="RefSeq" id="WP_000860047.1">
    <property type="nucleotide sequence ID" value="NC_009487.1"/>
</dbReference>
<dbReference type="SMR" id="A5IW24"/>
<dbReference type="KEGG" id="saj:SaurJH9_2621"/>
<dbReference type="HOGENOM" id="CLU_036645_1_0_9"/>
<dbReference type="UniPathway" id="UPA00028">
    <property type="reaction ID" value="UER00003"/>
</dbReference>
<dbReference type="GO" id="GO:0005737">
    <property type="term" value="C:cytoplasm"/>
    <property type="evidence" value="ECO:0007669"/>
    <property type="project" value="UniProtKB-SubCell"/>
</dbReference>
<dbReference type="GO" id="GO:0003864">
    <property type="term" value="F:3-methyl-2-oxobutanoate hydroxymethyltransferase activity"/>
    <property type="evidence" value="ECO:0007669"/>
    <property type="project" value="UniProtKB-UniRule"/>
</dbReference>
<dbReference type="GO" id="GO:0000287">
    <property type="term" value="F:magnesium ion binding"/>
    <property type="evidence" value="ECO:0007669"/>
    <property type="project" value="TreeGrafter"/>
</dbReference>
<dbReference type="GO" id="GO:0015940">
    <property type="term" value="P:pantothenate biosynthetic process"/>
    <property type="evidence" value="ECO:0007669"/>
    <property type="project" value="UniProtKB-UniRule"/>
</dbReference>
<dbReference type="CDD" id="cd06557">
    <property type="entry name" value="KPHMT-like"/>
    <property type="match status" value="1"/>
</dbReference>
<dbReference type="FunFam" id="3.20.20.60:FF:000030">
    <property type="entry name" value="3-methyl-2-oxobutanoate hydroxymethyltransferase"/>
    <property type="match status" value="1"/>
</dbReference>
<dbReference type="Gene3D" id="3.20.20.60">
    <property type="entry name" value="Phosphoenolpyruvate-binding domains"/>
    <property type="match status" value="1"/>
</dbReference>
<dbReference type="HAMAP" id="MF_00156">
    <property type="entry name" value="PanB"/>
    <property type="match status" value="1"/>
</dbReference>
<dbReference type="InterPro" id="IPR003700">
    <property type="entry name" value="Pantoate_hydroxy_MeTrfase"/>
</dbReference>
<dbReference type="InterPro" id="IPR015813">
    <property type="entry name" value="Pyrv/PenolPyrv_kinase-like_dom"/>
</dbReference>
<dbReference type="InterPro" id="IPR040442">
    <property type="entry name" value="Pyrv_kinase-like_dom_sf"/>
</dbReference>
<dbReference type="NCBIfam" id="TIGR00222">
    <property type="entry name" value="panB"/>
    <property type="match status" value="1"/>
</dbReference>
<dbReference type="NCBIfam" id="NF001452">
    <property type="entry name" value="PRK00311.1"/>
    <property type="match status" value="1"/>
</dbReference>
<dbReference type="PANTHER" id="PTHR20881">
    <property type="entry name" value="3-METHYL-2-OXOBUTANOATE HYDROXYMETHYLTRANSFERASE"/>
    <property type="match status" value="1"/>
</dbReference>
<dbReference type="PANTHER" id="PTHR20881:SF0">
    <property type="entry name" value="3-METHYL-2-OXOBUTANOATE HYDROXYMETHYLTRANSFERASE"/>
    <property type="match status" value="1"/>
</dbReference>
<dbReference type="Pfam" id="PF02548">
    <property type="entry name" value="Pantoate_transf"/>
    <property type="match status" value="1"/>
</dbReference>
<dbReference type="PIRSF" id="PIRSF000388">
    <property type="entry name" value="Pantoate_hydroxy_MeTrfase"/>
    <property type="match status" value="1"/>
</dbReference>
<dbReference type="SUPFAM" id="SSF51621">
    <property type="entry name" value="Phosphoenolpyruvate/pyruvate domain"/>
    <property type="match status" value="1"/>
</dbReference>
<name>PANB_STAA9</name>
<comment type="function">
    <text evidence="1">Catalyzes the reversible reaction in which hydroxymethyl group from 5,10-methylenetetrahydrofolate is transferred onto alpha-ketoisovalerate to form ketopantoate.</text>
</comment>
<comment type="catalytic activity">
    <reaction evidence="1">
        <text>3-methyl-2-oxobutanoate + (6R)-5,10-methylene-5,6,7,8-tetrahydrofolate + H2O = 2-dehydropantoate + (6S)-5,6,7,8-tetrahydrofolate</text>
        <dbReference type="Rhea" id="RHEA:11824"/>
        <dbReference type="ChEBI" id="CHEBI:11561"/>
        <dbReference type="ChEBI" id="CHEBI:11851"/>
        <dbReference type="ChEBI" id="CHEBI:15377"/>
        <dbReference type="ChEBI" id="CHEBI:15636"/>
        <dbReference type="ChEBI" id="CHEBI:57453"/>
        <dbReference type="EC" id="2.1.2.11"/>
    </reaction>
</comment>
<comment type="cofactor">
    <cofactor evidence="1">
        <name>Mg(2+)</name>
        <dbReference type="ChEBI" id="CHEBI:18420"/>
    </cofactor>
    <text evidence="1">Binds 1 Mg(2+) ion per subunit.</text>
</comment>
<comment type="pathway">
    <text evidence="1">Cofactor biosynthesis; (R)-pantothenate biosynthesis; (R)-pantoate from 3-methyl-2-oxobutanoate: step 1/2.</text>
</comment>
<comment type="subunit">
    <text evidence="1">Homodecamer; pentamer of dimers.</text>
</comment>
<comment type="subcellular location">
    <subcellularLocation>
        <location evidence="1">Cytoplasm</location>
    </subcellularLocation>
</comment>
<comment type="similarity">
    <text evidence="1">Belongs to the PanB family.</text>
</comment>
<reference key="1">
    <citation type="submission" date="2007-05" db="EMBL/GenBank/DDBJ databases">
        <title>Complete sequence of chromosome of Staphylococcus aureus subsp. aureus JH9.</title>
        <authorList>
            <consortium name="US DOE Joint Genome Institute"/>
            <person name="Copeland A."/>
            <person name="Lucas S."/>
            <person name="Lapidus A."/>
            <person name="Barry K."/>
            <person name="Detter J.C."/>
            <person name="Glavina del Rio T."/>
            <person name="Hammon N."/>
            <person name="Israni S."/>
            <person name="Pitluck S."/>
            <person name="Chain P."/>
            <person name="Malfatti S."/>
            <person name="Shin M."/>
            <person name="Vergez L."/>
            <person name="Schmutz J."/>
            <person name="Larimer F."/>
            <person name="Land M."/>
            <person name="Hauser L."/>
            <person name="Kyrpides N."/>
            <person name="Kim E."/>
            <person name="Tomasz A."/>
            <person name="Richardson P."/>
        </authorList>
    </citation>
    <scope>NUCLEOTIDE SEQUENCE [LARGE SCALE GENOMIC DNA]</scope>
    <source>
        <strain>JH9</strain>
    </source>
</reference>